<proteinExistence type="predicted"/>
<accession>Q92JL7</accession>
<organism>
    <name type="scientific">Rickettsia conorii (strain ATCC VR-613 / Malish 7)</name>
    <dbReference type="NCBI Taxonomy" id="272944"/>
    <lineage>
        <taxon>Bacteria</taxon>
        <taxon>Pseudomonadati</taxon>
        <taxon>Pseudomonadota</taxon>
        <taxon>Alphaproteobacteria</taxon>
        <taxon>Rickettsiales</taxon>
        <taxon>Rickettsiaceae</taxon>
        <taxon>Rickettsieae</taxon>
        <taxon>Rickettsia</taxon>
        <taxon>spotted fever group</taxon>
    </lineage>
</organism>
<sequence>MRQISVISLRLNCQCTINFFVMIPNNIKEMNSNPMEKLAFQDAISLISYMYHHAEDILKSSKSLLNQILTTTKEGLSTSWDDIKKTTSGNVEYDLWQMEKQVPESEIITEKAKSGQLRSIKISCFSVDCSKPL</sequence>
<protein>
    <recommendedName>
        <fullName>Uncharacterized protein RC0050</fullName>
    </recommendedName>
</protein>
<name>Y050_RICCN</name>
<feature type="chain" id="PRO_0000101440" description="Uncharacterized protein RC0050">
    <location>
        <begin position="1"/>
        <end position="133"/>
    </location>
</feature>
<reference key="1">
    <citation type="journal article" date="2001" name="Science">
        <title>Mechanisms of evolution in Rickettsia conorii and R. prowazekii.</title>
        <authorList>
            <person name="Ogata H."/>
            <person name="Audic S."/>
            <person name="Renesto-Audiffren P."/>
            <person name="Fournier P.-E."/>
            <person name="Barbe V."/>
            <person name="Samson D."/>
            <person name="Roux V."/>
            <person name="Cossart P."/>
            <person name="Weissenbach J."/>
            <person name="Claverie J.-M."/>
            <person name="Raoult D."/>
        </authorList>
    </citation>
    <scope>NUCLEOTIDE SEQUENCE [LARGE SCALE GENOMIC DNA]</scope>
    <source>
        <strain>ATCC VR-613 / Malish 7</strain>
    </source>
</reference>
<dbReference type="EMBL" id="AE006914">
    <property type="protein sequence ID" value="AAL02588.1"/>
    <property type="molecule type" value="Genomic_DNA"/>
</dbReference>
<dbReference type="PIR" id="B97706">
    <property type="entry name" value="B97706"/>
</dbReference>
<dbReference type="SMR" id="Q92JL7"/>
<dbReference type="KEGG" id="rco:RC0050"/>
<dbReference type="PATRIC" id="fig|272944.4.peg.60"/>
<dbReference type="HOGENOM" id="CLU_1905135_0_0_5"/>
<dbReference type="Proteomes" id="UP000000816">
    <property type="component" value="Chromosome"/>
</dbReference>
<gene>
    <name type="ordered locus">RC0050</name>
</gene>